<proteinExistence type="evidence at transcript level"/>
<protein>
    <recommendedName>
        <fullName>Mitochondrial inner membrane protease subunit 2</fullName>
        <ecNumber>3.4.21.-</ecNumber>
    </recommendedName>
    <alternativeName>
        <fullName>IMP2-like protein</fullName>
    </alternativeName>
</protein>
<organism>
    <name type="scientific">Danio rerio</name>
    <name type="common">Zebrafish</name>
    <name type="synonym">Brachydanio rerio</name>
    <dbReference type="NCBI Taxonomy" id="7955"/>
    <lineage>
        <taxon>Eukaryota</taxon>
        <taxon>Metazoa</taxon>
        <taxon>Chordata</taxon>
        <taxon>Craniata</taxon>
        <taxon>Vertebrata</taxon>
        <taxon>Euteleostomi</taxon>
        <taxon>Actinopterygii</taxon>
        <taxon>Neopterygii</taxon>
        <taxon>Teleostei</taxon>
        <taxon>Ostariophysi</taxon>
        <taxon>Cypriniformes</taxon>
        <taxon>Danionidae</taxon>
        <taxon>Danioninae</taxon>
        <taxon>Danio</taxon>
    </lineage>
</organism>
<feature type="chain" id="PRO_0000259579" description="Mitochondrial inner membrane protease subunit 2">
    <location>
        <begin position="1"/>
        <end position="183"/>
    </location>
</feature>
<feature type="transmembrane region" description="Helical" evidence="2">
    <location>
        <begin position="13"/>
        <end position="35"/>
    </location>
</feature>
<feature type="region of interest" description="Disordered" evidence="3">
    <location>
        <begin position="161"/>
        <end position="183"/>
    </location>
</feature>
<feature type="compositionally biased region" description="Basic and acidic residues" evidence="3">
    <location>
        <begin position="164"/>
        <end position="183"/>
    </location>
</feature>
<feature type="active site" evidence="1">
    <location>
        <position position="42"/>
    </location>
</feature>
<feature type="active site" evidence="1">
    <location>
        <position position="90"/>
    </location>
</feature>
<sequence length="183" mass="20699">MAQTGFGRRYFKAFVSGFFVAVPVTVTVLDRLAYVARVEGASMQPSLNPDGESSPDVVLLNRWSVRNYHVQRGDIVSVLSPKNPQQKIIKRVIGIEGDFIKTLGYKNRYVRVPDGHLWIEGDHHGHSFDSNAFGPVSLGLVHGRASHIIWPPSRWQRIEPSVPPDRRPLLNWDRAAEDKYDDD</sequence>
<evidence type="ECO:0000250" key="1"/>
<evidence type="ECO:0000255" key="2"/>
<evidence type="ECO:0000256" key="3">
    <source>
        <dbReference type="SAM" id="MobiDB-lite"/>
    </source>
</evidence>
<evidence type="ECO:0000305" key="4"/>
<name>IMP2L_DANRE</name>
<gene>
    <name type="primary">immp2l</name>
    <name type="ORF">zgc:100888</name>
</gene>
<dbReference type="EC" id="3.4.21.-"/>
<dbReference type="EMBL" id="BC078193">
    <property type="protein sequence ID" value="AAH78193.1"/>
    <property type="molecule type" value="mRNA"/>
</dbReference>
<dbReference type="RefSeq" id="NP_001003755.1">
    <property type="nucleotide sequence ID" value="NM_001003755.2"/>
</dbReference>
<dbReference type="SMR" id="Q6AZD4"/>
<dbReference type="FunCoup" id="Q6AZD4">
    <property type="interactions" value="727"/>
</dbReference>
<dbReference type="STRING" id="7955.ENSDARP00000119793"/>
<dbReference type="PaxDb" id="7955-ENSDARP00000119793"/>
<dbReference type="Ensembl" id="ENSDART00000010706">
    <property type="protein sequence ID" value="ENSDARP00000013772"/>
    <property type="gene ID" value="ENSDARG00000004925"/>
</dbReference>
<dbReference type="GeneID" id="445299"/>
<dbReference type="KEGG" id="dre:445299"/>
<dbReference type="AGR" id="ZFIN:ZDB-GENE-040808-9"/>
<dbReference type="CTD" id="83943"/>
<dbReference type="ZFIN" id="ZDB-GENE-040808-9">
    <property type="gene designation" value="immp2l"/>
</dbReference>
<dbReference type="eggNOG" id="KOG1568">
    <property type="taxonomic scope" value="Eukaryota"/>
</dbReference>
<dbReference type="HOGENOM" id="CLU_028723_4_1_1"/>
<dbReference type="InParanoid" id="Q6AZD4"/>
<dbReference type="OMA" id="WIPVIAW"/>
<dbReference type="OrthoDB" id="9996127at2759"/>
<dbReference type="PhylomeDB" id="Q6AZD4"/>
<dbReference type="PRO" id="PR:Q6AZD4"/>
<dbReference type="Proteomes" id="UP000000437">
    <property type="component" value="Alternate scaffold 25"/>
</dbReference>
<dbReference type="Proteomes" id="UP000000437">
    <property type="component" value="Chromosome 25"/>
</dbReference>
<dbReference type="Bgee" id="ENSDARG00000004925">
    <property type="expression patterns" value="Expressed in early embryo and 21 other cell types or tissues"/>
</dbReference>
<dbReference type="ExpressionAtlas" id="Q6AZD4">
    <property type="expression patterns" value="baseline and differential"/>
</dbReference>
<dbReference type="GO" id="GO:0042720">
    <property type="term" value="C:mitochondrial inner membrane peptidase complex"/>
    <property type="evidence" value="ECO:0000318"/>
    <property type="project" value="GO_Central"/>
</dbReference>
<dbReference type="GO" id="GO:0004175">
    <property type="term" value="F:endopeptidase activity"/>
    <property type="evidence" value="ECO:0000318"/>
    <property type="project" value="GO_Central"/>
</dbReference>
<dbReference type="GO" id="GO:0004252">
    <property type="term" value="F:serine-type endopeptidase activity"/>
    <property type="evidence" value="ECO:0007669"/>
    <property type="project" value="InterPro"/>
</dbReference>
<dbReference type="GO" id="GO:0006627">
    <property type="term" value="P:protein processing involved in protein targeting to mitochondrion"/>
    <property type="evidence" value="ECO:0000318"/>
    <property type="project" value="GO_Central"/>
</dbReference>
<dbReference type="GO" id="GO:0006465">
    <property type="term" value="P:signal peptide processing"/>
    <property type="evidence" value="ECO:0007669"/>
    <property type="project" value="InterPro"/>
</dbReference>
<dbReference type="CDD" id="cd06530">
    <property type="entry name" value="S26_SPase_I"/>
    <property type="match status" value="1"/>
</dbReference>
<dbReference type="FunFam" id="2.10.109.10:FF:000005">
    <property type="entry name" value="Mitochondrial inner membrane protease subunit"/>
    <property type="match status" value="1"/>
</dbReference>
<dbReference type="Gene3D" id="2.10.109.10">
    <property type="entry name" value="Umud Fragment, subunit A"/>
    <property type="match status" value="1"/>
</dbReference>
<dbReference type="InterPro" id="IPR037730">
    <property type="entry name" value="IMP2"/>
</dbReference>
<dbReference type="InterPro" id="IPR036286">
    <property type="entry name" value="LexA/Signal_pep-like_sf"/>
</dbReference>
<dbReference type="InterPro" id="IPR000223">
    <property type="entry name" value="Pept_S26A_signal_pept_1"/>
</dbReference>
<dbReference type="InterPro" id="IPR019758">
    <property type="entry name" value="Pept_S26A_signal_pept_1_CS"/>
</dbReference>
<dbReference type="InterPro" id="IPR019533">
    <property type="entry name" value="Peptidase_S26"/>
</dbReference>
<dbReference type="PANTHER" id="PTHR46041">
    <property type="entry name" value="MITOCHONDRIAL INNER MEMBRANE PROTEASE SUBUNIT 2"/>
    <property type="match status" value="1"/>
</dbReference>
<dbReference type="PANTHER" id="PTHR46041:SF2">
    <property type="entry name" value="MITOCHONDRIAL INNER MEMBRANE PROTEASE SUBUNIT 2"/>
    <property type="match status" value="1"/>
</dbReference>
<dbReference type="Pfam" id="PF10502">
    <property type="entry name" value="Peptidase_S26"/>
    <property type="match status" value="2"/>
</dbReference>
<dbReference type="PRINTS" id="PR00727">
    <property type="entry name" value="LEADERPTASE"/>
</dbReference>
<dbReference type="SUPFAM" id="SSF51306">
    <property type="entry name" value="LexA/Signal peptidase"/>
    <property type="match status" value="1"/>
</dbReference>
<dbReference type="PROSITE" id="PS00761">
    <property type="entry name" value="SPASE_I_3"/>
    <property type="match status" value="1"/>
</dbReference>
<accession>Q6AZD4</accession>
<comment type="function">
    <text evidence="1">Catalyzes the removal of transit peptides required for the targeting of proteins from the mitochondrial matrix, across the inner membrane, into the inter-membrane space.</text>
</comment>
<comment type="subunit">
    <text evidence="1">Heterodimer of 2 subunits, IMMPL1 and IMMPL2.</text>
</comment>
<comment type="subcellular location">
    <subcellularLocation>
        <location evidence="1">Mitochondrion inner membrane</location>
        <topology evidence="1">Single-pass membrane protein</topology>
    </subcellularLocation>
</comment>
<comment type="similarity">
    <text evidence="4">Belongs to the peptidase S26 family. IMP2 subfamily.</text>
</comment>
<keyword id="KW-0378">Hydrolase</keyword>
<keyword id="KW-0472">Membrane</keyword>
<keyword id="KW-0496">Mitochondrion</keyword>
<keyword id="KW-0999">Mitochondrion inner membrane</keyword>
<keyword id="KW-0645">Protease</keyword>
<keyword id="KW-1185">Reference proteome</keyword>
<keyword id="KW-0812">Transmembrane</keyword>
<keyword id="KW-1133">Transmembrane helix</keyword>
<reference key="1">
    <citation type="submission" date="2004-07" db="EMBL/GenBank/DDBJ databases">
        <authorList>
            <consortium name="NIH - Zebrafish Gene Collection (ZGC) project"/>
        </authorList>
    </citation>
    <scope>NUCLEOTIDE SEQUENCE [LARGE SCALE MRNA]</scope>
    <source>
        <tissue>Embryo</tissue>
    </source>
</reference>